<proteinExistence type="evidence at transcript level"/>
<keyword id="KW-0106">Calcium</keyword>
<keyword id="KW-1003">Cell membrane</keyword>
<keyword id="KW-0963">Cytoplasm</keyword>
<keyword id="KW-0472">Membrane</keyword>
<keyword id="KW-0479">Metal-binding</keyword>
<keyword id="KW-1185">Reference proteome</keyword>
<keyword id="KW-0677">Repeat</keyword>
<dbReference type="EMBL" id="AK009171">
    <property type="protein sequence ID" value="BAB26120.1"/>
    <property type="molecule type" value="mRNA"/>
</dbReference>
<dbReference type="CCDS" id="CCDS52634.1"/>
<dbReference type="RefSeq" id="NP_081388.1">
    <property type="nucleotide sequence ID" value="NM_027112.1"/>
</dbReference>
<dbReference type="SMR" id="Q9D7J7"/>
<dbReference type="BioGRID" id="213517">
    <property type="interactions" value="1"/>
</dbReference>
<dbReference type="FunCoup" id="Q9D7J7">
    <property type="interactions" value="7"/>
</dbReference>
<dbReference type="STRING" id="10090.ENSMUSP00000100553"/>
<dbReference type="iPTMnet" id="Q9D7J7"/>
<dbReference type="PhosphoSitePlus" id="Q9D7J7"/>
<dbReference type="PaxDb" id="10090-ENSMUSP00000100553"/>
<dbReference type="PeptideAtlas" id="Q9D7J7"/>
<dbReference type="ProteomicsDB" id="278021"/>
<dbReference type="Pumba" id="Q9D7J7"/>
<dbReference type="Antibodypedia" id="58579">
    <property type="antibodies" value="158 antibodies from 26 providers"/>
</dbReference>
<dbReference type="Ensembl" id="ENSMUST00000104947.5">
    <property type="protein sequence ID" value="ENSMUSP00000100553.3"/>
    <property type="gene ID" value="ENSMUSG00000078144.5"/>
</dbReference>
<dbReference type="GeneID" id="69543"/>
<dbReference type="KEGG" id="mmu:69543"/>
<dbReference type="UCSC" id="uc012gik.1">
    <property type="organism name" value="mouse"/>
</dbReference>
<dbReference type="AGR" id="MGI:1916793"/>
<dbReference type="CTD" id="84290"/>
<dbReference type="MGI" id="MGI:1916793">
    <property type="gene designation" value="Capns2"/>
</dbReference>
<dbReference type="VEuPathDB" id="HostDB:ENSMUSG00000078144"/>
<dbReference type="eggNOG" id="KOG0037">
    <property type="taxonomic scope" value="Eukaryota"/>
</dbReference>
<dbReference type="GeneTree" id="ENSGT00940000166682"/>
<dbReference type="HOGENOM" id="CLU_051357_2_0_1"/>
<dbReference type="InParanoid" id="Q9D7J7"/>
<dbReference type="OMA" id="TCRSMVS"/>
<dbReference type="OrthoDB" id="186625at2759"/>
<dbReference type="PhylomeDB" id="Q9D7J7"/>
<dbReference type="TreeFam" id="TF314682"/>
<dbReference type="Reactome" id="R-MMU-1474228">
    <property type="pathway name" value="Degradation of the extracellular matrix"/>
</dbReference>
<dbReference type="Reactome" id="R-MMU-9856530">
    <property type="pathway name" value="High laminar flow shear stress activates signaling by PIEZO1 and PECAM1:CDH5:KDR in endothelial cells"/>
</dbReference>
<dbReference type="Reactome" id="R-MMU-9860927">
    <property type="pathway name" value="Turbulent (oscillatory, disturbed) flow shear stress activates signaling by PIEZO1 and integrins in endothelial cells"/>
</dbReference>
<dbReference type="BioGRID-ORCS" id="69543">
    <property type="hits" value="2 hits in 76 CRISPR screens"/>
</dbReference>
<dbReference type="PRO" id="PR:Q9D7J7"/>
<dbReference type="Proteomes" id="UP000000589">
    <property type="component" value="Chromosome 8"/>
</dbReference>
<dbReference type="RNAct" id="Q9D7J7">
    <property type="molecule type" value="protein"/>
</dbReference>
<dbReference type="Bgee" id="ENSMUSG00000078144">
    <property type="expression patterns" value="Expressed in skin of external ear and 40 other cell types or tissues"/>
</dbReference>
<dbReference type="GO" id="GO:0005737">
    <property type="term" value="C:cytoplasm"/>
    <property type="evidence" value="ECO:0007669"/>
    <property type="project" value="UniProtKB-SubCell"/>
</dbReference>
<dbReference type="GO" id="GO:0005886">
    <property type="term" value="C:plasma membrane"/>
    <property type="evidence" value="ECO:0000304"/>
    <property type="project" value="Reactome"/>
</dbReference>
<dbReference type="GO" id="GO:0005509">
    <property type="term" value="F:calcium ion binding"/>
    <property type="evidence" value="ECO:0007669"/>
    <property type="project" value="InterPro"/>
</dbReference>
<dbReference type="GO" id="GO:0004198">
    <property type="term" value="F:calcium-dependent cysteine-type endopeptidase activity"/>
    <property type="evidence" value="ECO:0007669"/>
    <property type="project" value="Ensembl"/>
</dbReference>
<dbReference type="CDD" id="cd16188">
    <property type="entry name" value="EFh_PEF_CPNS1_2"/>
    <property type="match status" value="1"/>
</dbReference>
<dbReference type="FunFam" id="1.10.238.10:FF:000136">
    <property type="entry name" value="Calpain small subunit 1"/>
    <property type="match status" value="1"/>
</dbReference>
<dbReference type="Gene3D" id="1.10.238.10">
    <property type="entry name" value="EF-hand"/>
    <property type="match status" value="1"/>
</dbReference>
<dbReference type="InterPro" id="IPR011992">
    <property type="entry name" value="EF-hand-dom_pair"/>
</dbReference>
<dbReference type="InterPro" id="IPR002048">
    <property type="entry name" value="EF_hand_dom"/>
</dbReference>
<dbReference type="PANTHER" id="PTHR46735:SF4">
    <property type="entry name" value="CALPAIN SMALL SUBUNIT 2"/>
    <property type="match status" value="1"/>
</dbReference>
<dbReference type="PANTHER" id="PTHR46735">
    <property type="entry name" value="CALPAIN, SMALL SUBUNIT 1 A-RELATED"/>
    <property type="match status" value="1"/>
</dbReference>
<dbReference type="Pfam" id="PF13833">
    <property type="entry name" value="EF-hand_8"/>
    <property type="match status" value="1"/>
</dbReference>
<dbReference type="SUPFAM" id="SSF47473">
    <property type="entry name" value="EF-hand"/>
    <property type="match status" value="1"/>
</dbReference>
<dbReference type="PROSITE" id="PS00018">
    <property type="entry name" value="EF_HAND_1"/>
    <property type="match status" value="1"/>
</dbReference>
<dbReference type="PROSITE" id="PS50222">
    <property type="entry name" value="EF_HAND_2"/>
    <property type="match status" value="3"/>
</dbReference>
<gene>
    <name type="primary">Capns2</name>
</gene>
<protein>
    <recommendedName>
        <fullName>Calpain small subunit 2</fullName>
        <shortName>CSS2</shortName>
    </recommendedName>
    <alternativeName>
        <fullName>Calcium-dependent protease small subunit 2</fullName>
    </alternativeName>
</protein>
<name>CPNS2_MOUSE</name>
<accession>Q9D7J7</accession>
<reference key="1">
    <citation type="journal article" date="2005" name="Science">
        <title>The transcriptional landscape of the mammalian genome.</title>
        <authorList>
            <person name="Carninci P."/>
            <person name="Kasukawa T."/>
            <person name="Katayama S."/>
            <person name="Gough J."/>
            <person name="Frith M.C."/>
            <person name="Maeda N."/>
            <person name="Oyama R."/>
            <person name="Ravasi T."/>
            <person name="Lenhard B."/>
            <person name="Wells C."/>
            <person name="Kodzius R."/>
            <person name="Shimokawa K."/>
            <person name="Bajic V.B."/>
            <person name="Brenner S.E."/>
            <person name="Batalov S."/>
            <person name="Forrest A.R."/>
            <person name="Zavolan M."/>
            <person name="Davis M.J."/>
            <person name="Wilming L.G."/>
            <person name="Aidinis V."/>
            <person name="Allen J.E."/>
            <person name="Ambesi-Impiombato A."/>
            <person name="Apweiler R."/>
            <person name="Aturaliya R.N."/>
            <person name="Bailey T.L."/>
            <person name="Bansal M."/>
            <person name="Baxter L."/>
            <person name="Beisel K.W."/>
            <person name="Bersano T."/>
            <person name="Bono H."/>
            <person name="Chalk A.M."/>
            <person name="Chiu K.P."/>
            <person name="Choudhary V."/>
            <person name="Christoffels A."/>
            <person name="Clutterbuck D.R."/>
            <person name="Crowe M.L."/>
            <person name="Dalla E."/>
            <person name="Dalrymple B.P."/>
            <person name="de Bono B."/>
            <person name="Della Gatta G."/>
            <person name="di Bernardo D."/>
            <person name="Down T."/>
            <person name="Engstrom P."/>
            <person name="Fagiolini M."/>
            <person name="Faulkner G."/>
            <person name="Fletcher C.F."/>
            <person name="Fukushima T."/>
            <person name="Furuno M."/>
            <person name="Futaki S."/>
            <person name="Gariboldi M."/>
            <person name="Georgii-Hemming P."/>
            <person name="Gingeras T.R."/>
            <person name="Gojobori T."/>
            <person name="Green R.E."/>
            <person name="Gustincich S."/>
            <person name="Harbers M."/>
            <person name="Hayashi Y."/>
            <person name="Hensch T.K."/>
            <person name="Hirokawa N."/>
            <person name="Hill D."/>
            <person name="Huminiecki L."/>
            <person name="Iacono M."/>
            <person name="Ikeo K."/>
            <person name="Iwama A."/>
            <person name="Ishikawa T."/>
            <person name="Jakt M."/>
            <person name="Kanapin A."/>
            <person name="Katoh M."/>
            <person name="Kawasawa Y."/>
            <person name="Kelso J."/>
            <person name="Kitamura H."/>
            <person name="Kitano H."/>
            <person name="Kollias G."/>
            <person name="Krishnan S.P."/>
            <person name="Kruger A."/>
            <person name="Kummerfeld S.K."/>
            <person name="Kurochkin I.V."/>
            <person name="Lareau L.F."/>
            <person name="Lazarevic D."/>
            <person name="Lipovich L."/>
            <person name="Liu J."/>
            <person name="Liuni S."/>
            <person name="McWilliam S."/>
            <person name="Madan Babu M."/>
            <person name="Madera M."/>
            <person name="Marchionni L."/>
            <person name="Matsuda H."/>
            <person name="Matsuzawa S."/>
            <person name="Miki H."/>
            <person name="Mignone F."/>
            <person name="Miyake S."/>
            <person name="Morris K."/>
            <person name="Mottagui-Tabar S."/>
            <person name="Mulder N."/>
            <person name="Nakano N."/>
            <person name="Nakauchi H."/>
            <person name="Ng P."/>
            <person name="Nilsson R."/>
            <person name="Nishiguchi S."/>
            <person name="Nishikawa S."/>
            <person name="Nori F."/>
            <person name="Ohara O."/>
            <person name="Okazaki Y."/>
            <person name="Orlando V."/>
            <person name="Pang K.C."/>
            <person name="Pavan W.J."/>
            <person name="Pavesi G."/>
            <person name="Pesole G."/>
            <person name="Petrovsky N."/>
            <person name="Piazza S."/>
            <person name="Reed J."/>
            <person name="Reid J.F."/>
            <person name="Ring B.Z."/>
            <person name="Ringwald M."/>
            <person name="Rost B."/>
            <person name="Ruan Y."/>
            <person name="Salzberg S.L."/>
            <person name="Sandelin A."/>
            <person name="Schneider C."/>
            <person name="Schoenbach C."/>
            <person name="Sekiguchi K."/>
            <person name="Semple C.A."/>
            <person name="Seno S."/>
            <person name="Sessa L."/>
            <person name="Sheng Y."/>
            <person name="Shibata Y."/>
            <person name="Shimada H."/>
            <person name="Shimada K."/>
            <person name="Silva D."/>
            <person name="Sinclair B."/>
            <person name="Sperling S."/>
            <person name="Stupka E."/>
            <person name="Sugiura K."/>
            <person name="Sultana R."/>
            <person name="Takenaka Y."/>
            <person name="Taki K."/>
            <person name="Tammoja K."/>
            <person name="Tan S.L."/>
            <person name="Tang S."/>
            <person name="Taylor M.S."/>
            <person name="Tegner J."/>
            <person name="Teichmann S.A."/>
            <person name="Ueda H.R."/>
            <person name="van Nimwegen E."/>
            <person name="Verardo R."/>
            <person name="Wei C.L."/>
            <person name="Yagi K."/>
            <person name="Yamanishi H."/>
            <person name="Zabarovsky E."/>
            <person name="Zhu S."/>
            <person name="Zimmer A."/>
            <person name="Hide W."/>
            <person name="Bult C."/>
            <person name="Grimmond S.M."/>
            <person name="Teasdale R.D."/>
            <person name="Liu E.T."/>
            <person name="Brusic V."/>
            <person name="Quackenbush J."/>
            <person name="Wahlestedt C."/>
            <person name="Mattick J.S."/>
            <person name="Hume D.A."/>
            <person name="Kai C."/>
            <person name="Sasaki D."/>
            <person name="Tomaru Y."/>
            <person name="Fukuda S."/>
            <person name="Kanamori-Katayama M."/>
            <person name="Suzuki M."/>
            <person name="Aoki J."/>
            <person name="Arakawa T."/>
            <person name="Iida J."/>
            <person name="Imamura K."/>
            <person name="Itoh M."/>
            <person name="Kato T."/>
            <person name="Kawaji H."/>
            <person name="Kawagashira N."/>
            <person name="Kawashima T."/>
            <person name="Kojima M."/>
            <person name="Kondo S."/>
            <person name="Konno H."/>
            <person name="Nakano K."/>
            <person name="Ninomiya N."/>
            <person name="Nishio T."/>
            <person name="Okada M."/>
            <person name="Plessy C."/>
            <person name="Shibata K."/>
            <person name="Shiraki T."/>
            <person name="Suzuki S."/>
            <person name="Tagami M."/>
            <person name="Waki K."/>
            <person name="Watahiki A."/>
            <person name="Okamura-Oho Y."/>
            <person name="Suzuki H."/>
            <person name="Kawai J."/>
            <person name="Hayashizaki Y."/>
        </authorList>
    </citation>
    <scope>NUCLEOTIDE SEQUENCE [LARGE SCALE MRNA]</scope>
    <source>
        <strain>C57BL/6J</strain>
        <tissue>Tongue</tissue>
    </source>
</reference>
<sequence length="247" mass="27190">MFLAKAILEGADRGLGGALGGLLGGGGQARAGGGNIGGILGGIVNFISEAAAAQYTPEPPPQQQHFTVVEASESEEVRRFRQQFTQLAGPDMEVGATDLMNILNKVLSKHKELKTEGFSLDTCRSIVSVMDSDTTGKLGFEEFKYLWNNIKKWQCVFKQYDSDHSGSLGSSQLHGAMQAAGFQLNEQLYLMIVRRYADEDGGMDFNNFISCLVRLDAMFRAFKALDRDRDGLIQVSIREWLQLTMYS</sequence>
<organism>
    <name type="scientific">Mus musculus</name>
    <name type="common">Mouse</name>
    <dbReference type="NCBI Taxonomy" id="10090"/>
    <lineage>
        <taxon>Eukaryota</taxon>
        <taxon>Metazoa</taxon>
        <taxon>Chordata</taxon>
        <taxon>Craniata</taxon>
        <taxon>Vertebrata</taxon>
        <taxon>Euteleostomi</taxon>
        <taxon>Mammalia</taxon>
        <taxon>Eutheria</taxon>
        <taxon>Euarchontoglires</taxon>
        <taxon>Glires</taxon>
        <taxon>Rodentia</taxon>
        <taxon>Myomorpha</taxon>
        <taxon>Muroidea</taxon>
        <taxon>Muridae</taxon>
        <taxon>Murinae</taxon>
        <taxon>Mus</taxon>
        <taxon>Mus</taxon>
    </lineage>
</organism>
<evidence type="ECO:0000250" key="1"/>
<evidence type="ECO:0000250" key="2">
    <source>
        <dbReference type="UniProtKB" id="Q64537"/>
    </source>
</evidence>
<evidence type="ECO:0000255" key="3">
    <source>
        <dbReference type="PROSITE-ProRule" id="PRU00448"/>
    </source>
</evidence>
<evidence type="ECO:0000305" key="4"/>
<feature type="chain" id="PRO_0000073719" description="Calpain small subunit 2">
    <location>
        <begin position="1"/>
        <end position="247"/>
    </location>
</feature>
<feature type="domain" description="EF-hand 1" evidence="3">
    <location>
        <begin position="118"/>
        <end position="151"/>
    </location>
</feature>
<feature type="domain" description="EF-hand 2" evidence="3">
    <location>
        <begin position="148"/>
        <end position="183"/>
    </location>
</feature>
<feature type="domain" description="EF-hand 3" evidence="4">
    <location>
        <begin position="184"/>
        <end position="212"/>
    </location>
</feature>
<feature type="domain" description="EF-hand 4" evidence="3">
    <location>
        <begin position="213"/>
        <end position="247"/>
    </location>
</feature>
<feature type="binding site" evidence="2">
    <location>
        <position position="88"/>
    </location>
    <ligand>
        <name>Ca(2+)</name>
        <dbReference type="ChEBI" id="CHEBI:29108"/>
        <label>1</label>
    </ligand>
</feature>
<feature type="binding site" evidence="2">
    <location>
        <position position="91"/>
    </location>
    <ligand>
        <name>Ca(2+)</name>
        <dbReference type="ChEBI" id="CHEBI:29108"/>
        <label>1</label>
    </ligand>
</feature>
<feature type="binding site" evidence="2">
    <location>
        <position position="93"/>
    </location>
    <ligand>
        <name>Ca(2+)</name>
        <dbReference type="ChEBI" id="CHEBI:29108"/>
        <label>1</label>
    </ligand>
</feature>
<feature type="binding site" evidence="3">
    <location>
        <position position="131"/>
    </location>
    <ligand>
        <name>Ca(2+)</name>
        <dbReference type="ChEBI" id="CHEBI:29108"/>
        <label>2</label>
    </ligand>
</feature>
<feature type="binding site" evidence="3">
    <location>
        <position position="133"/>
    </location>
    <ligand>
        <name>Ca(2+)</name>
        <dbReference type="ChEBI" id="CHEBI:29108"/>
        <label>2</label>
    </ligand>
</feature>
<feature type="binding site" evidence="2 3">
    <location>
        <position position="135"/>
    </location>
    <ligand>
        <name>Ca(2+)</name>
        <dbReference type="ChEBI" id="CHEBI:29108"/>
        <label>2</label>
    </ligand>
</feature>
<feature type="binding site" evidence="2 3">
    <location>
        <position position="137"/>
    </location>
    <ligand>
        <name>Ca(2+)</name>
        <dbReference type="ChEBI" id="CHEBI:29108"/>
        <label>2</label>
    </ligand>
</feature>
<feature type="binding site" evidence="3">
    <location>
        <position position="142"/>
    </location>
    <ligand>
        <name>Ca(2+)</name>
        <dbReference type="ChEBI" id="CHEBI:29108"/>
        <label>2</label>
    </ligand>
</feature>
<feature type="binding site" evidence="2">
    <location>
        <position position="161"/>
    </location>
    <ligand>
        <name>Ca(2+)</name>
        <dbReference type="ChEBI" id="CHEBI:29108"/>
        <label>3</label>
    </ligand>
</feature>
<feature type="binding site" evidence="2">
    <location>
        <position position="163"/>
    </location>
    <ligand>
        <name>Ca(2+)</name>
        <dbReference type="ChEBI" id="CHEBI:29108"/>
        <label>3</label>
    </ligand>
</feature>
<feature type="binding site" evidence="2">
    <location>
        <position position="165"/>
    </location>
    <ligand>
        <name>Ca(2+)</name>
        <dbReference type="ChEBI" id="CHEBI:29108"/>
        <label>3</label>
    </ligand>
</feature>
<feature type="binding site" evidence="2">
    <location>
        <position position="204"/>
    </location>
    <ligand>
        <name>Ca(2+)</name>
        <dbReference type="ChEBI" id="CHEBI:29108"/>
        <label>4</label>
    </ligand>
</feature>
<comment type="function">
    <text evidence="1">Calcium-regulated non-lysosomal thiol-protease which catalyzes limited proteolysis of substrates involved in cytoskeletal remodeling and signal transduction. This small subunit may act as a tissue-specific chaperone of the large subunit, possibly by helping it fold into its correct conformation for activity (By similarity).</text>
</comment>
<comment type="subunit">
    <text evidence="1">Heterodimer of a large (catalytic) and a small (regulatory) subunit.</text>
</comment>
<comment type="subcellular location">
    <subcellularLocation>
        <location evidence="1">Cytoplasm</location>
    </subcellularLocation>
    <subcellularLocation>
        <location evidence="1">Cell membrane</location>
    </subcellularLocation>
    <text evidence="1">Translocates to the plasma membrane upon calcium binding.</text>
</comment>